<gene>
    <name evidence="1" type="primary">htpX</name>
    <name type="ordered locus">HAPS_0810</name>
</gene>
<keyword id="KW-0997">Cell inner membrane</keyword>
<keyword id="KW-1003">Cell membrane</keyword>
<keyword id="KW-0378">Hydrolase</keyword>
<keyword id="KW-0472">Membrane</keyword>
<keyword id="KW-0479">Metal-binding</keyword>
<keyword id="KW-0482">Metalloprotease</keyword>
<keyword id="KW-0645">Protease</keyword>
<keyword id="KW-1185">Reference proteome</keyword>
<keyword id="KW-0346">Stress response</keyword>
<keyword id="KW-0812">Transmembrane</keyword>
<keyword id="KW-1133">Transmembrane helix</keyword>
<keyword id="KW-0862">Zinc</keyword>
<organism>
    <name type="scientific">Glaesserella parasuis serovar 5 (strain SH0165)</name>
    <name type="common">Haemophilus parasuis</name>
    <dbReference type="NCBI Taxonomy" id="557723"/>
    <lineage>
        <taxon>Bacteria</taxon>
        <taxon>Pseudomonadati</taxon>
        <taxon>Pseudomonadota</taxon>
        <taxon>Gammaproteobacteria</taxon>
        <taxon>Pasteurellales</taxon>
        <taxon>Pasteurellaceae</taxon>
        <taxon>Glaesserella</taxon>
    </lineage>
</organism>
<evidence type="ECO:0000255" key="1">
    <source>
        <dbReference type="HAMAP-Rule" id="MF_00188"/>
    </source>
</evidence>
<accession>B8F543</accession>
<sequence>MMRIALFLATNFAVMIVLGIILSVTGIAGNSTGGILIMSVLFGFAGSLISLFMSKTMALKSVGAEIITEPRNNAERWLVETVKRQSQQAGIPMPDVAIYHSADVNAFATGATKSNSLVAVSTGLLNTMTEDEAEAVVAHEVAHIANGDMVTMTLLQGVLNTFVIFLSRMIATAVSSSRNDDGEETQSSGTYFLVSMVLEILFGVLATIIAMWFSRYREFRADAGSAQLVGKEKMIAALQRLQRVHDPEELPGSLNAMMINGKAKEFFMSHPPLEKRIEALRNL</sequence>
<proteinExistence type="inferred from homology"/>
<protein>
    <recommendedName>
        <fullName evidence="1">Protease HtpX</fullName>
        <ecNumber evidence="1">3.4.24.-</ecNumber>
    </recommendedName>
    <alternativeName>
        <fullName evidence="1">Heat shock protein HtpX</fullName>
    </alternativeName>
</protein>
<name>HTPX_GLAP5</name>
<reference key="1">
    <citation type="journal article" date="2009" name="J. Bacteriol.">
        <title>Complete genome sequence of Haemophilus parasuis SH0165.</title>
        <authorList>
            <person name="Yue M."/>
            <person name="Yang F."/>
            <person name="Yang J."/>
            <person name="Bei W."/>
            <person name="Cai X."/>
            <person name="Chen L."/>
            <person name="Dong J."/>
            <person name="Zhou R."/>
            <person name="Jin M."/>
            <person name="Jin Q."/>
            <person name="Chen H."/>
        </authorList>
    </citation>
    <scope>NUCLEOTIDE SEQUENCE [LARGE SCALE GENOMIC DNA]</scope>
    <source>
        <strain>SH0165</strain>
    </source>
</reference>
<comment type="cofactor">
    <cofactor evidence="1">
        <name>Zn(2+)</name>
        <dbReference type="ChEBI" id="CHEBI:29105"/>
    </cofactor>
    <text evidence="1">Binds 1 zinc ion per subunit.</text>
</comment>
<comment type="subcellular location">
    <subcellularLocation>
        <location evidence="1">Cell inner membrane</location>
        <topology evidence="1">Multi-pass membrane protein</topology>
    </subcellularLocation>
</comment>
<comment type="similarity">
    <text evidence="1">Belongs to the peptidase M48B family.</text>
</comment>
<feature type="chain" id="PRO_1000124230" description="Protease HtpX">
    <location>
        <begin position="1"/>
        <end position="283"/>
    </location>
</feature>
<feature type="transmembrane region" description="Helical" evidence="1">
    <location>
        <begin position="4"/>
        <end position="24"/>
    </location>
</feature>
<feature type="transmembrane region" description="Helical" evidence="1">
    <location>
        <begin position="33"/>
        <end position="53"/>
    </location>
</feature>
<feature type="transmembrane region" description="Helical" evidence="1">
    <location>
        <begin position="147"/>
        <end position="167"/>
    </location>
</feature>
<feature type="transmembrane region" description="Helical" evidence="1">
    <location>
        <begin position="192"/>
        <end position="212"/>
    </location>
</feature>
<feature type="active site" evidence="1">
    <location>
        <position position="140"/>
    </location>
</feature>
<feature type="binding site" evidence="1">
    <location>
        <position position="139"/>
    </location>
    <ligand>
        <name>Zn(2+)</name>
        <dbReference type="ChEBI" id="CHEBI:29105"/>
        <note>catalytic</note>
    </ligand>
</feature>
<feature type="binding site" evidence="1">
    <location>
        <position position="143"/>
    </location>
    <ligand>
        <name>Zn(2+)</name>
        <dbReference type="ChEBI" id="CHEBI:29105"/>
        <note>catalytic</note>
    </ligand>
</feature>
<feature type="binding site" evidence="1">
    <location>
        <position position="218"/>
    </location>
    <ligand>
        <name>Zn(2+)</name>
        <dbReference type="ChEBI" id="CHEBI:29105"/>
        <note>catalytic</note>
    </ligand>
</feature>
<dbReference type="EC" id="3.4.24.-" evidence="1"/>
<dbReference type="EMBL" id="CP001321">
    <property type="protein sequence ID" value="ACL32445.1"/>
    <property type="molecule type" value="Genomic_DNA"/>
</dbReference>
<dbReference type="RefSeq" id="WP_005714149.1">
    <property type="nucleotide sequence ID" value="NC_011852.1"/>
</dbReference>
<dbReference type="SMR" id="B8F543"/>
<dbReference type="STRING" id="557723.HAPS_0810"/>
<dbReference type="MEROPS" id="M48.002"/>
<dbReference type="GeneID" id="66619107"/>
<dbReference type="KEGG" id="hap:HAPS_0810"/>
<dbReference type="HOGENOM" id="CLU_042266_1_0_6"/>
<dbReference type="Proteomes" id="UP000006743">
    <property type="component" value="Chromosome"/>
</dbReference>
<dbReference type="GO" id="GO:0005886">
    <property type="term" value="C:plasma membrane"/>
    <property type="evidence" value="ECO:0007669"/>
    <property type="project" value="UniProtKB-SubCell"/>
</dbReference>
<dbReference type="GO" id="GO:0004222">
    <property type="term" value="F:metalloendopeptidase activity"/>
    <property type="evidence" value="ECO:0007669"/>
    <property type="project" value="UniProtKB-UniRule"/>
</dbReference>
<dbReference type="GO" id="GO:0008270">
    <property type="term" value="F:zinc ion binding"/>
    <property type="evidence" value="ECO:0007669"/>
    <property type="project" value="UniProtKB-UniRule"/>
</dbReference>
<dbReference type="GO" id="GO:0006508">
    <property type="term" value="P:proteolysis"/>
    <property type="evidence" value="ECO:0007669"/>
    <property type="project" value="UniProtKB-KW"/>
</dbReference>
<dbReference type="CDD" id="cd07335">
    <property type="entry name" value="M48B_HtpX_like"/>
    <property type="match status" value="1"/>
</dbReference>
<dbReference type="FunFam" id="3.30.2010.10:FF:000001">
    <property type="entry name" value="Protease HtpX"/>
    <property type="match status" value="1"/>
</dbReference>
<dbReference type="Gene3D" id="3.30.2010.10">
    <property type="entry name" value="Metalloproteases ('zincins'), catalytic domain"/>
    <property type="match status" value="1"/>
</dbReference>
<dbReference type="HAMAP" id="MF_00188">
    <property type="entry name" value="Pept_M48_protease_HtpX"/>
    <property type="match status" value="1"/>
</dbReference>
<dbReference type="InterPro" id="IPR050083">
    <property type="entry name" value="HtpX_protease"/>
</dbReference>
<dbReference type="InterPro" id="IPR022919">
    <property type="entry name" value="Pept_M48_protease_HtpX"/>
</dbReference>
<dbReference type="InterPro" id="IPR001915">
    <property type="entry name" value="Peptidase_M48"/>
</dbReference>
<dbReference type="NCBIfam" id="NF003965">
    <property type="entry name" value="PRK05457.1"/>
    <property type="match status" value="1"/>
</dbReference>
<dbReference type="PANTHER" id="PTHR43221">
    <property type="entry name" value="PROTEASE HTPX"/>
    <property type="match status" value="1"/>
</dbReference>
<dbReference type="PANTHER" id="PTHR43221:SF1">
    <property type="entry name" value="PROTEASE HTPX"/>
    <property type="match status" value="1"/>
</dbReference>
<dbReference type="Pfam" id="PF01435">
    <property type="entry name" value="Peptidase_M48"/>
    <property type="match status" value="1"/>
</dbReference>